<comment type="function">
    <text evidence="4">Mediates visceral muscle contractile activity (myotropic activity).</text>
</comment>
<comment type="subcellular location">
    <subcellularLocation>
        <location evidence="4">Secreted</location>
    </subcellularLocation>
</comment>
<comment type="similarity">
    <text evidence="1">Belongs to the periviscerokinin family.</text>
</comment>
<keyword id="KW-0027">Amidation</keyword>
<keyword id="KW-0903">Direct protein sequencing</keyword>
<keyword id="KW-0527">Neuropeptide</keyword>
<keyword id="KW-0964">Secreted</keyword>
<feature type="peptide" id="PRO_0000378797" description="Periviscerokinin-2" evidence="2">
    <location>
        <begin position="1"/>
        <end position="11"/>
    </location>
</feature>
<feature type="modified residue" description="Valine amide" evidence="2">
    <location>
        <position position="11"/>
    </location>
</feature>
<reference evidence="4" key="1">
    <citation type="journal article" date="2009" name="BMC Evol. Biol.">
        <title>A proteomic approach for studying insect phylogeny: CAPA peptides of ancient insect taxa (Dictyoptera, Blattoptera) as a test case.</title>
        <authorList>
            <person name="Roth S."/>
            <person name="Fromm B."/>
            <person name="Gaede G."/>
            <person name="Predel R."/>
        </authorList>
    </citation>
    <scope>PROTEIN SEQUENCE</scope>
    <scope>AMIDATION AT VAL-11</scope>
    <source>
        <tissue evidence="2">Abdominal perisympathetic organs</tissue>
    </source>
</reference>
<sequence length="11" mass="1103">GSSGLISMPRV</sequence>
<evidence type="ECO:0000255" key="1"/>
<evidence type="ECO:0000269" key="2">
    <source>
    </source>
</evidence>
<evidence type="ECO:0000303" key="3">
    <source>
    </source>
</evidence>
<evidence type="ECO:0000305" key="4"/>
<organism>
    <name type="scientific">Lucihormetica subcincta</name>
    <name type="common">Glow spot roach</name>
    <dbReference type="NCBI Taxonomy" id="406666"/>
    <lineage>
        <taxon>Eukaryota</taxon>
        <taxon>Metazoa</taxon>
        <taxon>Ecdysozoa</taxon>
        <taxon>Arthropoda</taxon>
        <taxon>Hexapoda</taxon>
        <taxon>Insecta</taxon>
        <taxon>Pterygota</taxon>
        <taxon>Neoptera</taxon>
        <taxon>Polyneoptera</taxon>
        <taxon>Dictyoptera</taxon>
        <taxon>Blattodea</taxon>
        <taxon>Blaberoidea</taxon>
        <taxon>Blaberidae</taxon>
        <taxon>Blaberinae</taxon>
        <taxon>Lucihormetica</taxon>
    </lineage>
</organism>
<accession>P85667</accession>
<proteinExistence type="evidence at protein level"/>
<protein>
    <recommendedName>
        <fullName evidence="3">Periviscerokinin-2</fullName>
        <shortName evidence="3">LucSu-PVK-2</shortName>
    </recommendedName>
</protein>
<dbReference type="GO" id="GO:0005576">
    <property type="term" value="C:extracellular region"/>
    <property type="evidence" value="ECO:0007669"/>
    <property type="project" value="UniProtKB-SubCell"/>
</dbReference>
<dbReference type="GO" id="GO:0007218">
    <property type="term" value="P:neuropeptide signaling pathway"/>
    <property type="evidence" value="ECO:0007669"/>
    <property type="project" value="UniProtKB-KW"/>
</dbReference>
<dbReference type="InterPro" id="IPR013231">
    <property type="entry name" value="Periviscerokinin"/>
</dbReference>
<dbReference type="Pfam" id="PF08259">
    <property type="entry name" value="Periviscerokin"/>
    <property type="match status" value="1"/>
</dbReference>
<name>PVK2_LUCSU</name>